<name>PA2A5_ECHOC</name>
<proteinExistence type="evidence at transcript level"/>
<organism>
    <name type="scientific">Echis ocellatus</name>
    <name type="common">Ocellated saw-scaled viper</name>
    <dbReference type="NCBI Taxonomy" id="99586"/>
    <lineage>
        <taxon>Eukaryota</taxon>
        <taxon>Metazoa</taxon>
        <taxon>Chordata</taxon>
        <taxon>Craniata</taxon>
        <taxon>Vertebrata</taxon>
        <taxon>Euteleostomi</taxon>
        <taxon>Lepidosauria</taxon>
        <taxon>Squamata</taxon>
        <taxon>Bifurcata</taxon>
        <taxon>Unidentata</taxon>
        <taxon>Episquamata</taxon>
        <taxon>Toxicofera</taxon>
        <taxon>Serpentes</taxon>
        <taxon>Colubroidea</taxon>
        <taxon>Viperidae</taxon>
        <taxon>Viperinae</taxon>
        <taxon>Echis</taxon>
    </lineage>
</organism>
<feature type="signal peptide" evidence="1">
    <location>
        <begin position="1"/>
        <end position="16"/>
    </location>
</feature>
<feature type="chain" id="PRO_0000022871" description="Acidic phospholipase A2 5">
    <location>
        <begin position="17"/>
        <end position="138"/>
    </location>
</feature>
<feature type="active site" evidence="1">
    <location>
        <position position="63"/>
    </location>
</feature>
<feature type="active site" evidence="1">
    <location>
        <position position="105"/>
    </location>
</feature>
<feature type="binding site" evidence="1">
    <location>
        <position position="43"/>
    </location>
    <ligand>
        <name>Ca(2+)</name>
        <dbReference type="ChEBI" id="CHEBI:29108"/>
    </ligand>
</feature>
<feature type="binding site" evidence="1">
    <location>
        <position position="45"/>
    </location>
    <ligand>
        <name>Ca(2+)</name>
        <dbReference type="ChEBI" id="CHEBI:29108"/>
    </ligand>
</feature>
<feature type="binding site" evidence="1">
    <location>
        <position position="47"/>
    </location>
    <ligand>
        <name>Ca(2+)</name>
        <dbReference type="ChEBI" id="CHEBI:29108"/>
    </ligand>
</feature>
<feature type="binding site" evidence="1">
    <location>
        <position position="64"/>
    </location>
    <ligand>
        <name>Ca(2+)</name>
        <dbReference type="ChEBI" id="CHEBI:29108"/>
    </ligand>
</feature>
<feature type="disulfide bond" evidence="1">
    <location>
        <begin position="42"/>
        <end position="131"/>
    </location>
</feature>
<feature type="disulfide bond" evidence="1">
    <location>
        <begin position="44"/>
        <end position="60"/>
    </location>
</feature>
<feature type="disulfide bond" evidence="1">
    <location>
        <begin position="59"/>
        <end position="111"/>
    </location>
</feature>
<feature type="disulfide bond" evidence="1">
    <location>
        <begin position="65"/>
        <end position="138"/>
    </location>
</feature>
<feature type="disulfide bond" evidence="1">
    <location>
        <begin position="66"/>
        <end position="104"/>
    </location>
</feature>
<feature type="disulfide bond" evidence="1">
    <location>
        <begin position="73"/>
        <end position="97"/>
    </location>
</feature>
<feature type="disulfide bond" evidence="1">
    <location>
        <begin position="91"/>
        <end position="102"/>
    </location>
</feature>
<feature type="sequence conflict" description="In Ref. 1; CAQ72891." evidence="4" ref="1">
    <original>T</original>
    <variation>A</variation>
    <location>
        <position position="3"/>
    </location>
</feature>
<keyword id="KW-0106">Calcium</keyword>
<keyword id="KW-1015">Disulfide bond</keyword>
<keyword id="KW-0378">Hydrolase</keyword>
<keyword id="KW-0442">Lipid degradation</keyword>
<keyword id="KW-0443">Lipid metabolism</keyword>
<keyword id="KW-0479">Metal-binding</keyword>
<keyword id="KW-0964">Secreted</keyword>
<keyword id="KW-0732">Signal</keyword>
<comment type="function">
    <text evidence="1">PLA2 catalyzes the calcium-dependent hydrolysis of the 2-acyl groups in 3-sn-phosphoglycerides.</text>
</comment>
<comment type="catalytic activity">
    <reaction evidence="2 3">
        <text>a 1,2-diacyl-sn-glycero-3-phosphocholine + H2O = a 1-acyl-sn-glycero-3-phosphocholine + a fatty acid + H(+)</text>
        <dbReference type="Rhea" id="RHEA:15801"/>
        <dbReference type="ChEBI" id="CHEBI:15377"/>
        <dbReference type="ChEBI" id="CHEBI:15378"/>
        <dbReference type="ChEBI" id="CHEBI:28868"/>
        <dbReference type="ChEBI" id="CHEBI:57643"/>
        <dbReference type="ChEBI" id="CHEBI:58168"/>
        <dbReference type="EC" id="3.1.1.4"/>
    </reaction>
</comment>
<comment type="cofactor">
    <cofactor evidence="1">
        <name>Ca(2+)</name>
        <dbReference type="ChEBI" id="CHEBI:29108"/>
    </cofactor>
    <text evidence="1">Binds 1 Ca(2+) ion.</text>
</comment>
<comment type="subcellular location">
    <subcellularLocation>
        <location evidence="1">Secreted</location>
    </subcellularLocation>
</comment>
<comment type="tissue specificity">
    <text evidence="4">Expressed by the venom gland.</text>
</comment>
<comment type="similarity">
    <text evidence="4">Belongs to the phospholipase A2 family. Group II subfamily. D49 sub-subfamily.</text>
</comment>
<reference key="1">
    <citation type="journal article" date="2009" name="J. Proteomics">
        <title>Combined snake venomics and venom gland transcriptomic analysis of the ocellated carpet viper, Echis ocellatus.</title>
        <authorList>
            <person name="Wagstaff S.C."/>
            <person name="Sanz L."/>
            <person name="Juarez P."/>
            <person name="Harrison R.A."/>
            <person name="Calvete J.J."/>
        </authorList>
    </citation>
    <scope>NUCLEOTIDE SEQUENCE [MRNA]</scope>
    <source>
        <tissue>Venom gland</tissue>
    </source>
</reference>
<reference key="2">
    <citation type="submission" date="2002-08" db="EMBL/GenBank/DDBJ databases">
        <title>Molecular cloning of phospholipase A2 from the venom glands of Echis carpet vipers.</title>
        <authorList>
            <person name="Harrison R.A."/>
            <person name="Hasson S."/>
            <person name="Bharati K."/>
        </authorList>
    </citation>
    <scope>NUCLEOTIDE SEQUENCE [MRNA]</scope>
    <source>
        <tissue>Venom gland</tissue>
    </source>
</reference>
<accession>P59171</accession>
<accession>B5U6Y5</accession>
<protein>
    <recommendedName>
        <fullName>Acidic phospholipase A2 5</fullName>
        <shortName>svPLA2</shortName>
        <ecNumber>3.1.1.4</ecNumber>
    </recommendedName>
    <alternativeName>
        <fullName>PLA2-Eoc79</fullName>
    </alternativeName>
    <alternativeName>
        <fullName>Phosphatidylcholine 2-acylhydrolase</fullName>
    </alternativeName>
</protein>
<evidence type="ECO:0000250" key="1"/>
<evidence type="ECO:0000255" key="2">
    <source>
        <dbReference type="PROSITE-ProRule" id="PRU10035"/>
    </source>
</evidence>
<evidence type="ECO:0000255" key="3">
    <source>
        <dbReference type="PROSITE-ProRule" id="PRU10036"/>
    </source>
</evidence>
<evidence type="ECO:0000305" key="4"/>
<sequence>MRTLWIVAVWLIGVEGSVIEFGTMIIEETGRSPFPFYTSYGCYCGLGGKGKPKDDTDRCCFVHDCCYGSMPDCSPKTDIYRYHRENGEIICESGTSCEKRICECDKAAAVCFRENLKTYKNKYMVYPDSLCKEESEKC</sequence>
<dbReference type="EC" id="3.1.1.4"/>
<dbReference type="EMBL" id="FM177947">
    <property type="protein sequence ID" value="CAQ72891.1"/>
    <property type="molecule type" value="mRNA"/>
</dbReference>
<dbReference type="EMBL" id="AF539921">
    <property type="protein sequence ID" value="AAN77204.1"/>
    <property type="molecule type" value="mRNA"/>
</dbReference>
<dbReference type="SMR" id="P59171"/>
<dbReference type="GO" id="GO:0005576">
    <property type="term" value="C:extracellular region"/>
    <property type="evidence" value="ECO:0007669"/>
    <property type="project" value="UniProtKB-SubCell"/>
</dbReference>
<dbReference type="GO" id="GO:0005509">
    <property type="term" value="F:calcium ion binding"/>
    <property type="evidence" value="ECO:0007669"/>
    <property type="project" value="InterPro"/>
</dbReference>
<dbReference type="GO" id="GO:0047498">
    <property type="term" value="F:calcium-dependent phospholipase A2 activity"/>
    <property type="evidence" value="ECO:0007669"/>
    <property type="project" value="TreeGrafter"/>
</dbReference>
<dbReference type="GO" id="GO:0005543">
    <property type="term" value="F:phospholipid binding"/>
    <property type="evidence" value="ECO:0007669"/>
    <property type="project" value="TreeGrafter"/>
</dbReference>
<dbReference type="GO" id="GO:0050482">
    <property type="term" value="P:arachidonate secretion"/>
    <property type="evidence" value="ECO:0007669"/>
    <property type="project" value="InterPro"/>
</dbReference>
<dbReference type="GO" id="GO:0016042">
    <property type="term" value="P:lipid catabolic process"/>
    <property type="evidence" value="ECO:0007669"/>
    <property type="project" value="UniProtKB-KW"/>
</dbReference>
<dbReference type="GO" id="GO:0042130">
    <property type="term" value="P:negative regulation of T cell proliferation"/>
    <property type="evidence" value="ECO:0007669"/>
    <property type="project" value="TreeGrafter"/>
</dbReference>
<dbReference type="GO" id="GO:0006644">
    <property type="term" value="P:phospholipid metabolic process"/>
    <property type="evidence" value="ECO:0007669"/>
    <property type="project" value="InterPro"/>
</dbReference>
<dbReference type="CDD" id="cd00125">
    <property type="entry name" value="PLA2c"/>
    <property type="match status" value="1"/>
</dbReference>
<dbReference type="FunFam" id="1.20.90.10:FF:000001">
    <property type="entry name" value="Basic phospholipase A2 homolog"/>
    <property type="match status" value="1"/>
</dbReference>
<dbReference type="Gene3D" id="1.20.90.10">
    <property type="entry name" value="Phospholipase A2 domain"/>
    <property type="match status" value="1"/>
</dbReference>
<dbReference type="InterPro" id="IPR001211">
    <property type="entry name" value="PLipase_A2"/>
</dbReference>
<dbReference type="InterPro" id="IPR033112">
    <property type="entry name" value="PLipase_A2_Asp_AS"/>
</dbReference>
<dbReference type="InterPro" id="IPR016090">
    <property type="entry name" value="PLipase_A2_dom"/>
</dbReference>
<dbReference type="InterPro" id="IPR036444">
    <property type="entry name" value="PLipase_A2_dom_sf"/>
</dbReference>
<dbReference type="InterPro" id="IPR033113">
    <property type="entry name" value="PLipase_A2_His_AS"/>
</dbReference>
<dbReference type="PANTHER" id="PTHR11716">
    <property type="entry name" value="PHOSPHOLIPASE A2 FAMILY MEMBER"/>
    <property type="match status" value="1"/>
</dbReference>
<dbReference type="PANTHER" id="PTHR11716:SF9">
    <property type="entry name" value="PHOSPHOLIPASE A2, MEMBRANE ASSOCIATED"/>
    <property type="match status" value="1"/>
</dbReference>
<dbReference type="Pfam" id="PF00068">
    <property type="entry name" value="Phospholip_A2_1"/>
    <property type="match status" value="1"/>
</dbReference>
<dbReference type="PRINTS" id="PR00389">
    <property type="entry name" value="PHPHLIPASEA2"/>
</dbReference>
<dbReference type="SMART" id="SM00085">
    <property type="entry name" value="PA2c"/>
    <property type="match status" value="1"/>
</dbReference>
<dbReference type="SUPFAM" id="SSF48619">
    <property type="entry name" value="Phospholipase A2, PLA2"/>
    <property type="match status" value="1"/>
</dbReference>
<dbReference type="PROSITE" id="PS00119">
    <property type="entry name" value="PA2_ASP"/>
    <property type="match status" value="1"/>
</dbReference>
<dbReference type="PROSITE" id="PS00118">
    <property type="entry name" value="PA2_HIS"/>
    <property type="match status" value="1"/>
</dbReference>